<organism>
    <name type="scientific">Gluconacetobacter diazotrophicus (strain ATCC 49037 / DSM 5601 / CCUG 37298 / CIP 103539 / LMG 7603 / PAl5)</name>
    <dbReference type="NCBI Taxonomy" id="272568"/>
    <lineage>
        <taxon>Bacteria</taxon>
        <taxon>Pseudomonadati</taxon>
        <taxon>Pseudomonadota</taxon>
        <taxon>Alphaproteobacteria</taxon>
        <taxon>Acetobacterales</taxon>
        <taxon>Acetobacteraceae</taxon>
        <taxon>Gluconacetobacter</taxon>
    </lineage>
</organism>
<comment type="function">
    <text evidence="1">Involved in protein export. Acts as a chaperone by maintaining the newly synthesized protein in an open conformation. Functions as a peptidyl-prolyl cis-trans isomerase.</text>
</comment>
<comment type="catalytic activity">
    <reaction evidence="1">
        <text>[protein]-peptidylproline (omega=180) = [protein]-peptidylproline (omega=0)</text>
        <dbReference type="Rhea" id="RHEA:16237"/>
        <dbReference type="Rhea" id="RHEA-COMP:10747"/>
        <dbReference type="Rhea" id="RHEA-COMP:10748"/>
        <dbReference type="ChEBI" id="CHEBI:83833"/>
        <dbReference type="ChEBI" id="CHEBI:83834"/>
        <dbReference type="EC" id="5.2.1.8"/>
    </reaction>
</comment>
<comment type="subcellular location">
    <subcellularLocation>
        <location>Cytoplasm</location>
    </subcellularLocation>
    <text evidence="1">About half TF is bound to the ribosome near the polypeptide exit tunnel while the other half is free in the cytoplasm.</text>
</comment>
<comment type="domain">
    <text evidence="1">Consists of 3 domains; the N-terminus binds the ribosome, the middle domain has PPIase activity, while the C-terminus has intrinsic chaperone activity on its own.</text>
</comment>
<comment type="similarity">
    <text evidence="1">Belongs to the FKBP-type PPIase family. Tig subfamily.</text>
</comment>
<name>TIG_GLUDA</name>
<keyword id="KW-0131">Cell cycle</keyword>
<keyword id="KW-0132">Cell division</keyword>
<keyword id="KW-0143">Chaperone</keyword>
<keyword id="KW-0963">Cytoplasm</keyword>
<keyword id="KW-0413">Isomerase</keyword>
<keyword id="KW-1185">Reference proteome</keyword>
<keyword id="KW-0697">Rotamase</keyword>
<gene>
    <name evidence="1" type="primary">tig</name>
    <name type="ordered locus">GDI3045</name>
    <name type="ordered locus">Gdia_3323</name>
</gene>
<dbReference type="EC" id="5.2.1.8" evidence="1"/>
<dbReference type="EMBL" id="AM889285">
    <property type="protein sequence ID" value="CAP56988.1"/>
    <property type="molecule type" value="Genomic_DNA"/>
</dbReference>
<dbReference type="EMBL" id="CP001189">
    <property type="protein sequence ID" value="ACI53050.1"/>
    <property type="molecule type" value="Genomic_DNA"/>
</dbReference>
<dbReference type="RefSeq" id="WP_012227354.1">
    <property type="nucleotide sequence ID" value="NC_010125.1"/>
</dbReference>
<dbReference type="SMR" id="A9HRV7"/>
<dbReference type="STRING" id="272568.GDI3045"/>
<dbReference type="KEGG" id="gdi:GDI3045"/>
<dbReference type="KEGG" id="gdj:Gdia_3323"/>
<dbReference type="eggNOG" id="COG0544">
    <property type="taxonomic scope" value="Bacteria"/>
</dbReference>
<dbReference type="HOGENOM" id="CLU_033058_2_2_5"/>
<dbReference type="OrthoDB" id="9767721at2"/>
<dbReference type="Proteomes" id="UP000001176">
    <property type="component" value="Chromosome"/>
</dbReference>
<dbReference type="GO" id="GO:0005737">
    <property type="term" value="C:cytoplasm"/>
    <property type="evidence" value="ECO:0007669"/>
    <property type="project" value="UniProtKB-SubCell"/>
</dbReference>
<dbReference type="GO" id="GO:0003755">
    <property type="term" value="F:peptidyl-prolyl cis-trans isomerase activity"/>
    <property type="evidence" value="ECO:0007669"/>
    <property type="project" value="UniProtKB-UniRule"/>
</dbReference>
<dbReference type="GO" id="GO:0044183">
    <property type="term" value="F:protein folding chaperone"/>
    <property type="evidence" value="ECO:0007669"/>
    <property type="project" value="TreeGrafter"/>
</dbReference>
<dbReference type="GO" id="GO:0043022">
    <property type="term" value="F:ribosome binding"/>
    <property type="evidence" value="ECO:0007669"/>
    <property type="project" value="TreeGrafter"/>
</dbReference>
<dbReference type="GO" id="GO:0051083">
    <property type="term" value="P:'de novo' cotranslational protein folding"/>
    <property type="evidence" value="ECO:0007669"/>
    <property type="project" value="TreeGrafter"/>
</dbReference>
<dbReference type="GO" id="GO:0051301">
    <property type="term" value="P:cell division"/>
    <property type="evidence" value="ECO:0007669"/>
    <property type="project" value="UniProtKB-KW"/>
</dbReference>
<dbReference type="GO" id="GO:0061077">
    <property type="term" value="P:chaperone-mediated protein folding"/>
    <property type="evidence" value="ECO:0007669"/>
    <property type="project" value="TreeGrafter"/>
</dbReference>
<dbReference type="GO" id="GO:0015031">
    <property type="term" value="P:protein transport"/>
    <property type="evidence" value="ECO:0007669"/>
    <property type="project" value="UniProtKB-UniRule"/>
</dbReference>
<dbReference type="GO" id="GO:0043335">
    <property type="term" value="P:protein unfolding"/>
    <property type="evidence" value="ECO:0007669"/>
    <property type="project" value="TreeGrafter"/>
</dbReference>
<dbReference type="FunFam" id="3.10.50.40:FF:000001">
    <property type="entry name" value="Trigger factor"/>
    <property type="match status" value="1"/>
</dbReference>
<dbReference type="Gene3D" id="3.10.50.40">
    <property type="match status" value="1"/>
</dbReference>
<dbReference type="Gene3D" id="3.30.70.1050">
    <property type="entry name" value="Trigger factor ribosome-binding domain"/>
    <property type="match status" value="1"/>
</dbReference>
<dbReference type="Gene3D" id="1.10.3120.10">
    <property type="entry name" value="Trigger factor, C-terminal domain"/>
    <property type="match status" value="1"/>
</dbReference>
<dbReference type="HAMAP" id="MF_00303">
    <property type="entry name" value="Trigger_factor_Tig"/>
    <property type="match status" value="1"/>
</dbReference>
<dbReference type="InterPro" id="IPR046357">
    <property type="entry name" value="PPIase_dom_sf"/>
</dbReference>
<dbReference type="InterPro" id="IPR001179">
    <property type="entry name" value="PPIase_FKBP_dom"/>
</dbReference>
<dbReference type="InterPro" id="IPR005215">
    <property type="entry name" value="Trig_fac"/>
</dbReference>
<dbReference type="InterPro" id="IPR008880">
    <property type="entry name" value="Trigger_fac_C"/>
</dbReference>
<dbReference type="InterPro" id="IPR037041">
    <property type="entry name" value="Trigger_fac_C_sf"/>
</dbReference>
<dbReference type="InterPro" id="IPR008881">
    <property type="entry name" value="Trigger_fac_ribosome-bd_bac"/>
</dbReference>
<dbReference type="InterPro" id="IPR036611">
    <property type="entry name" value="Trigger_fac_ribosome-bd_sf"/>
</dbReference>
<dbReference type="InterPro" id="IPR027304">
    <property type="entry name" value="Trigger_fact/SurA_dom_sf"/>
</dbReference>
<dbReference type="NCBIfam" id="TIGR00115">
    <property type="entry name" value="tig"/>
    <property type="match status" value="1"/>
</dbReference>
<dbReference type="PANTHER" id="PTHR30560">
    <property type="entry name" value="TRIGGER FACTOR CHAPERONE AND PEPTIDYL-PROLYL CIS/TRANS ISOMERASE"/>
    <property type="match status" value="1"/>
</dbReference>
<dbReference type="PANTHER" id="PTHR30560:SF3">
    <property type="entry name" value="TRIGGER FACTOR-LIKE PROTEIN TIG, CHLOROPLASTIC"/>
    <property type="match status" value="1"/>
</dbReference>
<dbReference type="Pfam" id="PF00254">
    <property type="entry name" value="FKBP_C"/>
    <property type="match status" value="1"/>
</dbReference>
<dbReference type="Pfam" id="PF05698">
    <property type="entry name" value="Trigger_C"/>
    <property type="match status" value="1"/>
</dbReference>
<dbReference type="Pfam" id="PF05697">
    <property type="entry name" value="Trigger_N"/>
    <property type="match status" value="1"/>
</dbReference>
<dbReference type="PIRSF" id="PIRSF003095">
    <property type="entry name" value="Trigger_factor"/>
    <property type="match status" value="1"/>
</dbReference>
<dbReference type="SUPFAM" id="SSF54534">
    <property type="entry name" value="FKBP-like"/>
    <property type="match status" value="1"/>
</dbReference>
<dbReference type="SUPFAM" id="SSF109998">
    <property type="entry name" value="Triger factor/SurA peptide-binding domain-like"/>
    <property type="match status" value="1"/>
</dbReference>
<dbReference type="SUPFAM" id="SSF102735">
    <property type="entry name" value="Trigger factor ribosome-binding domain"/>
    <property type="match status" value="1"/>
</dbReference>
<dbReference type="PROSITE" id="PS50059">
    <property type="entry name" value="FKBP_PPIASE"/>
    <property type="match status" value="1"/>
</dbReference>
<reference key="1">
    <citation type="journal article" date="2009" name="BMC Genomics">
        <title>Complete genome sequence of the sugarcane nitrogen-fixing endophyte Gluconacetobacter diazotrophicus Pal5.</title>
        <authorList>
            <person name="Bertalan M."/>
            <person name="Albano R."/>
            <person name="de Padua V."/>
            <person name="Rouws L."/>
            <person name="Rojas C."/>
            <person name="Hemerly A."/>
            <person name="Teixeira K."/>
            <person name="Schwab S."/>
            <person name="Araujo J."/>
            <person name="Oliveira A."/>
            <person name="Franca L."/>
            <person name="Magalhaes V."/>
            <person name="Alqueres S."/>
            <person name="Cardoso A."/>
            <person name="Almeida W."/>
            <person name="Loureiro M.M."/>
            <person name="Nogueira E."/>
            <person name="Cidade D."/>
            <person name="Oliveira D."/>
            <person name="Simao T."/>
            <person name="Macedo J."/>
            <person name="Valadao A."/>
            <person name="Dreschsel M."/>
            <person name="Freitas F."/>
            <person name="Vidal M."/>
            <person name="Guedes H."/>
            <person name="Rodrigues E."/>
            <person name="Meneses C."/>
            <person name="Brioso P."/>
            <person name="Pozzer L."/>
            <person name="Figueiredo D."/>
            <person name="Montano H."/>
            <person name="Junior J."/>
            <person name="de Souza Filho G."/>
            <person name="Martin Quintana Flores V."/>
            <person name="Ferreira B."/>
            <person name="Branco A."/>
            <person name="Gonzalez P."/>
            <person name="Guillobel H."/>
            <person name="Lemos M."/>
            <person name="Seibel L."/>
            <person name="Macedo J."/>
            <person name="Alves-Ferreira M."/>
            <person name="Sachetto-Martins G."/>
            <person name="Coelho A."/>
            <person name="Santos E."/>
            <person name="Amaral G."/>
            <person name="Neves A."/>
            <person name="Pacheco A.B."/>
            <person name="Carvalho D."/>
            <person name="Lery L."/>
            <person name="Bisch P."/>
            <person name="Rossle S.C."/>
            <person name="Urmenyi T."/>
            <person name="Rael Pereira A."/>
            <person name="Silva R."/>
            <person name="Rondinelli E."/>
            <person name="von Kruger W."/>
            <person name="Martins O."/>
            <person name="Baldani J.I."/>
            <person name="Ferreira P.C."/>
        </authorList>
    </citation>
    <scope>NUCLEOTIDE SEQUENCE [LARGE SCALE GENOMIC DNA]</scope>
    <source>
        <strain>ATCC 49037 / DSM 5601 / CCUG 37298 / CIP 103539 / LMG 7603 / PAl5</strain>
    </source>
</reference>
<reference key="2">
    <citation type="journal article" date="2010" name="Stand. Genomic Sci.">
        <title>Two genome sequences of the same bacterial strain, Gluconacetobacter diazotrophicus PAl 5, suggest a new standard in genome sequence submission.</title>
        <authorList>
            <person name="Giongo A."/>
            <person name="Tyler H.L."/>
            <person name="Zipperer U.N."/>
            <person name="Triplett E.W."/>
        </authorList>
    </citation>
    <scope>NUCLEOTIDE SEQUENCE [LARGE SCALE GENOMIC DNA]</scope>
    <source>
        <strain>ATCC 49037 / DSM 5601 / CCUG 37298 / CIP 103539 / LMG 7603 / PAl5</strain>
    </source>
</reference>
<protein>
    <recommendedName>
        <fullName evidence="1">Trigger factor</fullName>
        <shortName evidence="1">TF</shortName>
        <ecNumber evidence="1">5.2.1.8</ecNumber>
    </recommendedName>
    <alternativeName>
        <fullName evidence="1">PPIase</fullName>
    </alternativeName>
</protein>
<sequence>MQVTETLSAGLKRGFTVTVPAGELESKRTARLKELGQSMNLPGFRPGKVPLSIVKQRYGDAVQGEVLEQAVSDATRALMDERGLRPAMQPRVDLVAGAEPGGKADLEFKVEVELLPDIAQPDLSTLSLTRLKATPDAETIDKALKDIASRQRDFETIEDVRPAAQGDVVVVDFVGKVDGVAFEGGTAQDVNVELGGAGFIPGFAEQIEGMSPGEEKVITVTFPADYSAENLAGKEATFDITAKALKRPVDVEIDDEMAKKIGFEGLEQVRELITRQVEQEYEQLSRLRIKRELLDALAEKTDFEAPQGMVEAEFAQIWQRVEADRKAGELDEEDKEKDEDTLRADYRKIAERRVKLGLLLAEIGRANAITVSQDEMLQAIRAEAMRYPGQEQQVFEFFRKNPQAAESLRGPIFENKVVDYVIELATVEDKDVTPEELAEIPPADL</sequence>
<feature type="chain" id="PRO_1000079042" description="Trigger factor">
    <location>
        <begin position="1"/>
        <end position="445"/>
    </location>
</feature>
<feature type="domain" description="PPIase FKBP-type" evidence="1">
    <location>
        <begin position="166"/>
        <end position="251"/>
    </location>
</feature>
<proteinExistence type="inferred from homology"/>
<evidence type="ECO:0000255" key="1">
    <source>
        <dbReference type="HAMAP-Rule" id="MF_00303"/>
    </source>
</evidence>
<accession>A9HRV7</accession>
<accession>B5ZLA8</accession>